<gene>
    <name evidence="6" type="primary">DMWD</name>
    <name type="synonym">DM9</name>
</gene>
<protein>
    <recommendedName>
        <fullName>Dystrophia myotonica WD repeat-containing protein</fullName>
    </recommendedName>
    <alternativeName>
        <fullName>Dystrophia myotonica-containing WD repeat motif protein</fullName>
    </alternativeName>
    <alternativeName>
        <fullName>Protein 59</fullName>
    </alternativeName>
    <alternativeName>
        <fullName>Protein DMR-N9</fullName>
    </alternativeName>
</protein>
<accession>Q09019</accession>
<name>DMWD_HUMAN</name>
<reference key="1">
    <citation type="journal article" date="2004" name="Nature">
        <title>The DNA sequence and biology of human chromosome 19.</title>
        <authorList>
            <person name="Grimwood J."/>
            <person name="Gordon L.A."/>
            <person name="Olsen A.S."/>
            <person name="Terry A."/>
            <person name="Schmutz J."/>
            <person name="Lamerdin J.E."/>
            <person name="Hellsten U."/>
            <person name="Goodstein D."/>
            <person name="Couronne O."/>
            <person name="Tran-Gyamfi M."/>
            <person name="Aerts A."/>
            <person name="Altherr M."/>
            <person name="Ashworth L."/>
            <person name="Bajorek E."/>
            <person name="Black S."/>
            <person name="Branscomb E."/>
            <person name="Caenepeel S."/>
            <person name="Carrano A.V."/>
            <person name="Caoile C."/>
            <person name="Chan Y.M."/>
            <person name="Christensen M."/>
            <person name="Cleland C.A."/>
            <person name="Copeland A."/>
            <person name="Dalin E."/>
            <person name="Dehal P."/>
            <person name="Denys M."/>
            <person name="Detter J.C."/>
            <person name="Escobar J."/>
            <person name="Flowers D."/>
            <person name="Fotopulos D."/>
            <person name="Garcia C."/>
            <person name="Georgescu A.M."/>
            <person name="Glavina T."/>
            <person name="Gomez M."/>
            <person name="Gonzales E."/>
            <person name="Groza M."/>
            <person name="Hammon N."/>
            <person name="Hawkins T."/>
            <person name="Haydu L."/>
            <person name="Ho I."/>
            <person name="Huang W."/>
            <person name="Israni S."/>
            <person name="Jett J."/>
            <person name="Kadner K."/>
            <person name="Kimball H."/>
            <person name="Kobayashi A."/>
            <person name="Larionov V."/>
            <person name="Leem S.-H."/>
            <person name="Lopez F."/>
            <person name="Lou Y."/>
            <person name="Lowry S."/>
            <person name="Malfatti S."/>
            <person name="Martinez D."/>
            <person name="McCready P.M."/>
            <person name="Medina C."/>
            <person name="Morgan J."/>
            <person name="Nelson K."/>
            <person name="Nolan M."/>
            <person name="Ovcharenko I."/>
            <person name="Pitluck S."/>
            <person name="Pollard M."/>
            <person name="Popkie A.P."/>
            <person name="Predki P."/>
            <person name="Quan G."/>
            <person name="Ramirez L."/>
            <person name="Rash S."/>
            <person name="Retterer J."/>
            <person name="Rodriguez A."/>
            <person name="Rogers S."/>
            <person name="Salamov A."/>
            <person name="Salazar A."/>
            <person name="She X."/>
            <person name="Smith D."/>
            <person name="Slezak T."/>
            <person name="Solovyev V."/>
            <person name="Thayer N."/>
            <person name="Tice H."/>
            <person name="Tsai M."/>
            <person name="Ustaszewska A."/>
            <person name="Vo N."/>
            <person name="Wagner M."/>
            <person name="Wheeler J."/>
            <person name="Wu K."/>
            <person name="Xie G."/>
            <person name="Yang J."/>
            <person name="Dubchak I."/>
            <person name="Furey T.S."/>
            <person name="DeJong P."/>
            <person name="Dickson M."/>
            <person name="Gordon D."/>
            <person name="Eichler E.E."/>
            <person name="Pennacchio L.A."/>
            <person name="Richardson P."/>
            <person name="Stubbs L."/>
            <person name="Rokhsar D.S."/>
            <person name="Myers R.M."/>
            <person name="Rubin E.M."/>
            <person name="Lucas S.M."/>
        </authorList>
    </citation>
    <scope>NUCLEOTIDE SEQUENCE [LARGE SCALE GENOMIC DNA]</scope>
</reference>
<reference key="2">
    <citation type="journal article" date="1993" name="Genomics">
        <title>Genomic organization and transcriptional units at the myotonic dystrophy locus.</title>
        <authorList>
            <person name="Shaw D.J."/>
            <person name="McCurrach M."/>
            <person name="Rundle S.A."/>
            <person name="Harley H.G."/>
            <person name="Crow S.R."/>
            <person name="Sohn R."/>
            <person name="Thirion J.-P."/>
            <person name="Hamshere M.G."/>
            <person name="Buckler A.J."/>
            <person name="Harper P.S."/>
            <person name="Housman D.E."/>
            <person name="Brook J.D."/>
        </authorList>
    </citation>
    <scope>NUCLEOTIDE SEQUENCE [MRNA] OF 123-674</scope>
    <source>
        <tissue>Brain</tissue>
    </source>
</reference>
<reference key="3">
    <citation type="journal article" date="1993" name="Hum. Mol. Genet.">
        <title>Structure and genomic sequence of the myotonic dystrophy (DM kinase) gene.</title>
        <authorList>
            <person name="Mahadevan M.S."/>
            <person name="Amemiya C."/>
            <person name="Jansen G."/>
            <person name="Sabourin L."/>
            <person name="Baird S."/>
            <person name="Neville C.E."/>
            <person name="Wormskamp N."/>
            <person name="Segers B."/>
            <person name="Batzer M."/>
            <person name="Lamerdin J."/>
            <person name="de Jong P.J."/>
            <person name="Wieringa B."/>
            <person name="Korneluk R.G."/>
        </authorList>
    </citation>
    <scope>NUCLEOTIDE SEQUENCE [GENOMIC DNA] OF 660-674</scope>
</reference>
<reference key="4">
    <citation type="journal article" date="2012" name="Proc. Natl. Acad. Sci. U.S.A.">
        <title>N-terminal acetylome analyses and functional insights of the N-terminal acetyltransferase NatB.</title>
        <authorList>
            <person name="Van Damme P."/>
            <person name="Lasa M."/>
            <person name="Polevoda B."/>
            <person name="Gazquez C."/>
            <person name="Elosegui-Artola A."/>
            <person name="Kim D.S."/>
            <person name="De Juan-Pardo E."/>
            <person name="Demeyer K."/>
            <person name="Hole K."/>
            <person name="Larrea E."/>
            <person name="Timmerman E."/>
            <person name="Prieto J."/>
            <person name="Arnesen T."/>
            <person name="Sherman F."/>
            <person name="Gevaert K."/>
            <person name="Aldabe R."/>
        </authorList>
    </citation>
    <scope>ACETYLATION [LARGE SCALE ANALYSIS] AT ALA-2</scope>
    <scope>CLEAVAGE OF INITIATOR METHIONINE [LARGE SCALE ANALYSIS]</scope>
    <scope>IDENTIFICATION BY MASS SPECTROMETRY [LARGE SCALE ANALYSIS]</scope>
</reference>
<reference key="5">
    <citation type="journal article" date="2013" name="J. Proteome Res.">
        <title>Toward a comprehensive characterization of a human cancer cell phosphoproteome.</title>
        <authorList>
            <person name="Zhou H."/>
            <person name="Di Palma S."/>
            <person name="Preisinger C."/>
            <person name="Peng M."/>
            <person name="Polat A.N."/>
            <person name="Heck A.J."/>
            <person name="Mohammed S."/>
        </authorList>
    </citation>
    <scope>PHOSPHORYLATION [LARGE SCALE ANALYSIS] AT SER-495</scope>
    <scope>IDENTIFICATION BY MASS SPECTROMETRY [LARGE SCALE ANALYSIS]</scope>
    <source>
        <tissue>Cervix carcinoma</tissue>
        <tissue>Erythroleukemia</tissue>
    </source>
</reference>
<reference key="6">
    <citation type="journal article" date="2014" name="J. Proteomics">
        <title>An enzyme assisted RP-RPLC approach for in-depth analysis of human liver phosphoproteome.</title>
        <authorList>
            <person name="Bian Y."/>
            <person name="Song C."/>
            <person name="Cheng K."/>
            <person name="Dong M."/>
            <person name="Wang F."/>
            <person name="Huang J."/>
            <person name="Sun D."/>
            <person name="Wang L."/>
            <person name="Ye M."/>
            <person name="Zou H."/>
        </authorList>
    </citation>
    <scope>IDENTIFICATION BY MASS SPECTROMETRY [LARGE SCALE ANALYSIS]</scope>
    <source>
        <tissue>Liver</tissue>
    </source>
</reference>
<reference key="7">
    <citation type="journal article" date="2021" name="FEBS J.">
        <title>The dystrophia myotonica WD repeat-containing protein DMWD and WDR20 differentially regulate USP12 deubiquitinase.</title>
        <authorList>
            <person name="Olazabal-Herrero A."/>
            <person name="Bilbao-Arribas M."/>
            <person name="Carlevaris O."/>
            <person name="Sendino M."/>
            <person name="Varela-Martinez E."/>
            <person name="Jugo B.M."/>
            <person name="Berra E."/>
            <person name="Rodriguez J.A."/>
        </authorList>
    </citation>
    <scope>FUNCTION</scope>
    <scope>SUBUNIT</scope>
    <scope>INTERACTION WITH USP12 AND USP46</scope>
    <scope>SUBCELLULAR LOCATION</scope>
    <scope>MUTAGENESIS OF PHE-326 AND TRP-370</scope>
</reference>
<dbReference type="EMBL" id="AC011530">
    <property type="status" value="NOT_ANNOTATED_CDS"/>
    <property type="molecule type" value="Genomic_DNA"/>
</dbReference>
<dbReference type="EMBL" id="L19267">
    <property type="protein sequence ID" value="AAA35767.1"/>
    <property type="molecule type" value="mRNA"/>
</dbReference>
<dbReference type="EMBL" id="L08835">
    <property type="protein sequence ID" value="AAC14447.1"/>
    <property type="molecule type" value="Genomic_DNA"/>
</dbReference>
<dbReference type="CCDS" id="CCDS33054.1"/>
<dbReference type="PIR" id="A49364">
    <property type="entry name" value="A49364"/>
</dbReference>
<dbReference type="RefSeq" id="NP_004934.1">
    <property type="nucleotide sequence ID" value="NM_004943.2"/>
</dbReference>
<dbReference type="SMR" id="Q09019"/>
<dbReference type="BioGRID" id="108102">
    <property type="interactions" value="87"/>
</dbReference>
<dbReference type="ComplexPortal" id="CPX-9381">
    <property type="entry name" value="USP12-DMWD deubiquitinase complex"/>
</dbReference>
<dbReference type="FunCoup" id="Q09019">
    <property type="interactions" value="454"/>
</dbReference>
<dbReference type="IntAct" id="Q09019">
    <property type="interactions" value="74"/>
</dbReference>
<dbReference type="MINT" id="Q09019"/>
<dbReference type="STRING" id="9606.ENSP00000270223"/>
<dbReference type="GlyGen" id="Q09019">
    <property type="glycosylation" value="2 sites, 1 O-linked glycan (1 site)"/>
</dbReference>
<dbReference type="iPTMnet" id="Q09019"/>
<dbReference type="PhosphoSitePlus" id="Q09019"/>
<dbReference type="BioMuta" id="DMWD"/>
<dbReference type="DMDM" id="215274169"/>
<dbReference type="jPOST" id="Q09019"/>
<dbReference type="MassIVE" id="Q09019"/>
<dbReference type="PaxDb" id="9606-ENSP00000270223"/>
<dbReference type="PeptideAtlas" id="Q09019"/>
<dbReference type="ProteomicsDB" id="58711"/>
<dbReference type="Pumba" id="Q09019"/>
<dbReference type="Antibodypedia" id="31398">
    <property type="antibodies" value="141 antibodies from 20 providers"/>
</dbReference>
<dbReference type="DNASU" id="1762"/>
<dbReference type="Ensembl" id="ENST00000270223.7">
    <property type="protein sequence ID" value="ENSP00000270223.5"/>
    <property type="gene ID" value="ENSG00000185800.12"/>
</dbReference>
<dbReference type="GeneID" id="1762"/>
<dbReference type="KEGG" id="hsa:1762"/>
<dbReference type="MANE-Select" id="ENST00000270223.7">
    <property type="protein sequence ID" value="ENSP00000270223.5"/>
    <property type="RefSeq nucleotide sequence ID" value="NM_004943.2"/>
    <property type="RefSeq protein sequence ID" value="NP_004934.1"/>
</dbReference>
<dbReference type="UCSC" id="uc002pdj.2">
    <property type="organism name" value="human"/>
</dbReference>
<dbReference type="AGR" id="HGNC:2936"/>
<dbReference type="CTD" id="1762"/>
<dbReference type="DisGeNET" id="1762"/>
<dbReference type="GeneCards" id="DMWD"/>
<dbReference type="HGNC" id="HGNC:2936">
    <property type="gene designation" value="DMWD"/>
</dbReference>
<dbReference type="HPA" id="ENSG00000185800">
    <property type="expression patterns" value="Low tissue specificity"/>
</dbReference>
<dbReference type="MIM" id="609857">
    <property type="type" value="gene"/>
</dbReference>
<dbReference type="neXtProt" id="NX_Q09019"/>
<dbReference type="OpenTargets" id="ENSG00000185800"/>
<dbReference type="PharmGKB" id="PA27390"/>
<dbReference type="VEuPathDB" id="HostDB:ENSG00000185800"/>
<dbReference type="eggNOG" id="KOG2394">
    <property type="taxonomic scope" value="Eukaryota"/>
</dbReference>
<dbReference type="GeneTree" id="ENSGT00390000007686"/>
<dbReference type="InParanoid" id="Q09019"/>
<dbReference type="OMA" id="LKWIPET"/>
<dbReference type="OrthoDB" id="3367at2759"/>
<dbReference type="PAN-GO" id="Q09019">
    <property type="GO annotations" value="0 GO annotations based on evolutionary models"/>
</dbReference>
<dbReference type="PhylomeDB" id="Q09019"/>
<dbReference type="TreeFam" id="TF314961"/>
<dbReference type="PathwayCommons" id="Q09019"/>
<dbReference type="SignaLink" id="Q09019"/>
<dbReference type="BioGRID-ORCS" id="1762">
    <property type="hits" value="15 hits in 1154 CRISPR screens"/>
</dbReference>
<dbReference type="CD-CODE" id="FB4E32DD">
    <property type="entry name" value="Presynaptic clusters and postsynaptic densities"/>
</dbReference>
<dbReference type="GeneWiki" id="DMWD_(gene)"/>
<dbReference type="GenomeRNAi" id="1762"/>
<dbReference type="Pharos" id="Q09019">
    <property type="development level" value="Tbio"/>
</dbReference>
<dbReference type="PRO" id="PR:Q09019"/>
<dbReference type="Proteomes" id="UP000005640">
    <property type="component" value="Chromosome 19"/>
</dbReference>
<dbReference type="RNAct" id="Q09019">
    <property type="molecule type" value="protein"/>
</dbReference>
<dbReference type="Bgee" id="ENSG00000185800">
    <property type="expression patterns" value="Expressed in apex of heart and 159 other cell types or tissues"/>
</dbReference>
<dbReference type="ExpressionAtlas" id="Q09019">
    <property type="expression patterns" value="baseline and differential"/>
</dbReference>
<dbReference type="GO" id="GO:0005737">
    <property type="term" value="C:cytoplasm"/>
    <property type="evidence" value="ECO:0000314"/>
    <property type="project" value="UniProtKB"/>
</dbReference>
<dbReference type="GO" id="GO:0030425">
    <property type="term" value="C:dendrite"/>
    <property type="evidence" value="ECO:0007669"/>
    <property type="project" value="UniProtKB-SubCell"/>
</dbReference>
<dbReference type="GO" id="GO:0005634">
    <property type="term" value="C:nucleus"/>
    <property type="evidence" value="ECO:0000314"/>
    <property type="project" value="UniProtKB"/>
</dbReference>
<dbReference type="GO" id="GO:0043204">
    <property type="term" value="C:perikaryon"/>
    <property type="evidence" value="ECO:0007669"/>
    <property type="project" value="UniProtKB-SubCell"/>
</dbReference>
<dbReference type="GO" id="GO:0035800">
    <property type="term" value="F:deubiquitinase activator activity"/>
    <property type="evidence" value="ECO:0000314"/>
    <property type="project" value="UniProtKB"/>
</dbReference>
<dbReference type="Gene3D" id="2.130.10.10">
    <property type="entry name" value="YVTN repeat-like/Quinoprotein amine dehydrogenase"/>
    <property type="match status" value="1"/>
</dbReference>
<dbReference type="InterPro" id="IPR015943">
    <property type="entry name" value="WD40/YVTN_repeat-like_dom_sf"/>
</dbReference>
<dbReference type="InterPro" id="IPR036322">
    <property type="entry name" value="WD40_repeat_dom_sf"/>
</dbReference>
<dbReference type="InterPro" id="IPR001680">
    <property type="entry name" value="WD40_rpt"/>
</dbReference>
<dbReference type="InterPro" id="IPR051362">
    <property type="entry name" value="WD_repeat_creC_regulators"/>
</dbReference>
<dbReference type="PANTHER" id="PTHR14107:SF15">
    <property type="entry name" value="DYSTROPHIA MYOTONICA WD REPEAT-CONTAINING PROTEIN"/>
    <property type="match status" value="1"/>
</dbReference>
<dbReference type="PANTHER" id="PTHR14107">
    <property type="entry name" value="WD REPEAT PROTEIN"/>
    <property type="match status" value="1"/>
</dbReference>
<dbReference type="Pfam" id="PF00400">
    <property type="entry name" value="WD40"/>
    <property type="match status" value="2"/>
</dbReference>
<dbReference type="SMART" id="SM00320">
    <property type="entry name" value="WD40"/>
    <property type="match status" value="4"/>
</dbReference>
<dbReference type="SUPFAM" id="SSF50978">
    <property type="entry name" value="WD40 repeat-like"/>
    <property type="match status" value="1"/>
</dbReference>
<dbReference type="PROSITE" id="PS50082">
    <property type="entry name" value="WD_REPEATS_2"/>
    <property type="match status" value="1"/>
</dbReference>
<dbReference type="PROSITE" id="PS50294">
    <property type="entry name" value="WD_REPEATS_REGION"/>
    <property type="match status" value="1"/>
</dbReference>
<sequence length="674" mass="70438">MAAGGAEGGSGPGAAMGDCAEIKSQFRTREGFYKLLPGDGAARRSGPASAQTPVPPQPPQPPPGPASASGPGAAGPASSPPPAGPGPGPALPAVRLSLVRLGEPDSAGAGEPPATPAGLGSGGDRVCFNLGRELYFYPGCCRRGSQRSIDLNKPIDKRIYKGTQPTCHDFNQFTAATETISLLVGFSAGQVQYLDLIKKDTSKLFNEERLIDKTKVTYLKWLPESESLFLASHASGHLYLYNVSHPCASAPPQYSLLKQGEGFSVYAAKSKAPRNPLAKWAVGEGPLNEFAFSPDGRHLACVSQDGCLRVFHFDSMLLRGLMKSYFGGLLCVCWSPDGRYVVTGGEDDLVTVWSFTEGRVVARGHGHKSWVNAVAFDPYTTRAEEAATAAGADGERSGEEEEEEPEAAGTGSAGGAPLSPLPKAGSITYRFGSAGQDTQFCLWDLTEDVLYPHPPLARTRTLPGTPGTTPPAASSSRGGEPGPGPLPRSLSRSNSLPHPAGGGKAGGPGVAAEPGTPFSIGRFATLTLQERRDRGAEKEHKRYHSLGNISRGGSGGSGSGGEKPSGPVPRSRLDPAKVLGTALCPRIHEVPLLEPLVCKKIAQERLTVLLFLEDCIITACQEGLICTWARPGKAFTDEETEAQTGEGSWPRSPSKSVVEGISSQPGNSPSGTVV</sequence>
<proteinExistence type="evidence at protein level"/>
<organism>
    <name type="scientific">Homo sapiens</name>
    <name type="common">Human</name>
    <dbReference type="NCBI Taxonomy" id="9606"/>
    <lineage>
        <taxon>Eukaryota</taxon>
        <taxon>Metazoa</taxon>
        <taxon>Chordata</taxon>
        <taxon>Craniata</taxon>
        <taxon>Vertebrata</taxon>
        <taxon>Euteleostomi</taxon>
        <taxon>Mammalia</taxon>
        <taxon>Eutheria</taxon>
        <taxon>Euarchontoglires</taxon>
        <taxon>Primates</taxon>
        <taxon>Haplorrhini</taxon>
        <taxon>Catarrhini</taxon>
        <taxon>Hominidae</taxon>
        <taxon>Homo</taxon>
    </lineage>
</organism>
<keyword id="KW-0007">Acetylation</keyword>
<keyword id="KW-0966">Cell projection</keyword>
<keyword id="KW-0963">Cytoplasm</keyword>
<keyword id="KW-0488">Methylation</keyword>
<keyword id="KW-0539">Nucleus</keyword>
<keyword id="KW-0597">Phosphoprotein</keyword>
<keyword id="KW-1267">Proteomics identification</keyword>
<keyword id="KW-1185">Reference proteome</keyword>
<keyword id="KW-0677">Repeat</keyword>
<keyword id="KW-0853">WD repeat</keyword>
<evidence type="ECO:0000250" key="1">
    <source>
        <dbReference type="UniProtKB" id="Q08274"/>
    </source>
</evidence>
<evidence type="ECO:0000255" key="2"/>
<evidence type="ECO:0000256" key="3">
    <source>
        <dbReference type="SAM" id="MobiDB-lite"/>
    </source>
</evidence>
<evidence type="ECO:0000269" key="4">
    <source>
    </source>
</evidence>
<evidence type="ECO:0000305" key="5"/>
<evidence type="ECO:0000312" key="6">
    <source>
        <dbReference type="HGNC" id="HGNC:2936"/>
    </source>
</evidence>
<evidence type="ECO:0007744" key="7">
    <source>
    </source>
</evidence>
<evidence type="ECO:0007744" key="8">
    <source>
    </source>
</evidence>
<feature type="initiator methionine" description="Removed" evidence="7">
    <location>
        <position position="1"/>
    </location>
</feature>
<feature type="chain" id="PRO_0000050956" description="Dystrophia myotonica WD repeat-containing protein">
    <location>
        <begin position="2"/>
        <end position="674"/>
    </location>
</feature>
<feature type="repeat" description="WD 1" evidence="2">
    <location>
        <begin position="211"/>
        <end position="251"/>
    </location>
</feature>
<feature type="repeat" description="WD 2" evidence="2">
    <location>
        <begin position="282"/>
        <end position="321"/>
    </location>
</feature>
<feature type="repeat" description="WD 3" evidence="2">
    <location>
        <begin position="324"/>
        <end position="363"/>
    </location>
</feature>
<feature type="repeat" description="WD 4" evidence="2">
    <location>
        <begin position="366"/>
        <end position="409"/>
    </location>
</feature>
<feature type="repeat" description="WD 5" evidence="2">
    <location>
        <begin position="413"/>
        <end position="453"/>
    </location>
</feature>
<feature type="repeat" description="WD 6" evidence="2">
    <location>
        <begin position="601"/>
        <end position="638"/>
    </location>
</feature>
<feature type="region of interest" description="Disordered" evidence="3">
    <location>
        <begin position="31"/>
        <end position="92"/>
    </location>
</feature>
<feature type="region of interest" description="Disordered" evidence="3">
    <location>
        <begin position="103"/>
        <end position="122"/>
    </location>
</feature>
<feature type="region of interest" description="Disordered" evidence="3">
    <location>
        <begin position="384"/>
        <end position="419"/>
    </location>
</feature>
<feature type="region of interest" description="Disordered" evidence="3">
    <location>
        <begin position="456"/>
        <end position="516"/>
    </location>
</feature>
<feature type="region of interest" description="Disordered" evidence="3">
    <location>
        <begin position="532"/>
        <end position="573"/>
    </location>
</feature>
<feature type="region of interest" description="Disordered" evidence="3">
    <location>
        <begin position="637"/>
        <end position="674"/>
    </location>
</feature>
<feature type="compositionally biased region" description="Pro residues" evidence="3">
    <location>
        <begin position="53"/>
        <end position="65"/>
    </location>
</feature>
<feature type="compositionally biased region" description="Low complexity" evidence="3">
    <location>
        <begin position="66"/>
        <end position="77"/>
    </location>
</feature>
<feature type="compositionally biased region" description="Pro residues" evidence="3">
    <location>
        <begin position="78"/>
        <end position="90"/>
    </location>
</feature>
<feature type="compositionally biased region" description="Low complexity" evidence="3">
    <location>
        <begin position="107"/>
        <end position="118"/>
    </location>
</feature>
<feature type="compositionally biased region" description="Low complexity" evidence="3">
    <location>
        <begin position="457"/>
        <end position="478"/>
    </location>
</feature>
<feature type="compositionally biased region" description="Low complexity" evidence="3">
    <location>
        <begin position="487"/>
        <end position="499"/>
    </location>
</feature>
<feature type="compositionally biased region" description="Gly residues" evidence="3">
    <location>
        <begin position="500"/>
        <end position="509"/>
    </location>
</feature>
<feature type="compositionally biased region" description="Gly residues" evidence="3">
    <location>
        <begin position="550"/>
        <end position="563"/>
    </location>
</feature>
<feature type="compositionally biased region" description="Polar residues" evidence="3">
    <location>
        <begin position="642"/>
        <end position="674"/>
    </location>
</feature>
<feature type="modified residue" description="N-acetylalanine" evidence="7">
    <location>
        <position position="2"/>
    </location>
</feature>
<feature type="modified residue" description="Phosphoserine" evidence="8">
    <location>
        <position position="495"/>
    </location>
</feature>
<feature type="modified residue" description="Omega-N-methylarginine" evidence="1">
    <location>
        <position position="551"/>
    </location>
</feature>
<feature type="mutagenesis site" description="Impairs binding to USP12." evidence="4">
    <original>F</original>
    <variation>A</variation>
    <location>
        <position position="326"/>
    </location>
</feature>
<feature type="mutagenesis site" description="Impairs binding to USP12." evidence="4">
    <original>W</original>
    <variation>A</variation>
    <location>
        <position position="370"/>
    </location>
</feature>
<feature type="sequence conflict" description="In Ref. 2; AAA35767." evidence="5" ref="2">
    <original>G</original>
    <variation>A</variation>
    <location>
        <position position="306"/>
    </location>
</feature>
<feature type="sequence conflict" description="In Ref. 2; AAA35767." evidence="5" ref="2">
    <original>P</original>
    <variation>SL</variation>
    <location>
        <position position="378"/>
    </location>
</feature>
<feature type="sequence conflict" description="In Ref. 2; AAA35767." evidence="5" ref="2">
    <original>A</original>
    <variation>P</variation>
    <location>
        <position position="629"/>
    </location>
</feature>
<comment type="function">
    <text evidence="4">Regulator of the deubiquitinating USP12/DMWD/WDR48 complex (PubMed:33844468). Functions as a cofactor that promotes USP12 enzymatic activity (PubMed:33844468).</text>
</comment>
<comment type="subunit">
    <text evidence="4">Component of the USP12/DMWD/WDR48 deubiquitinating complex (PubMed:33844468). Interacts with USP12; promotes its enzymatic activity (PubMed:33844468). Interacts with USP46 (PubMed:33844468).</text>
</comment>
<comment type="subcellular location">
    <subcellularLocation>
        <location evidence="4">Cytoplasm</location>
    </subcellularLocation>
    <subcellularLocation>
        <location evidence="4">Nucleus</location>
    </subcellularLocation>
    <subcellularLocation>
        <location evidence="1">Perikaryon</location>
    </subcellularLocation>
    <subcellularLocation>
        <location evidence="1">Cell projection</location>
        <location evidence="1">Dendrite</location>
    </subcellularLocation>
    <text evidence="1 4">Localizes mainly to the cytoplasm however shuttles between the cytoplasm and nucleus (PubMed:33844468). In neurons, shows punctate expression throughout the cell body, nucleus and dendrites. Not detected in axons.</text>
</comment>